<reference key="1">
    <citation type="journal article" date="1988" name="J. Bacteriol.">
        <title>Genes encoding core components of the phycobilisome in the cyanobacterium Calothrix sp. strain PCC 7601: occurrence of a multigene family.</title>
        <authorList>
            <person name="Houmard J."/>
            <person name="Capuano V."/>
            <person name="Coursin T."/>
            <person name="Tandeau de Marsac N."/>
        </authorList>
    </citation>
    <scope>NUCLEOTIDE SEQUENCE [GENOMIC DNA]</scope>
    <scope>INDUCTION</scope>
    <source>
        <strain>UTEX 481 / PCC 7601 / SAG 1410-2</strain>
    </source>
</reference>
<reference key="2">
    <citation type="journal article" date="1991" name="Plant Cell">
        <title>Hormogonium Differentiation in the Cyanobacterium Calothrix: A Photoregulated Developmental Process.</title>
        <authorList>
            <person name="Damerval T."/>
            <person name="Guglielmi G."/>
            <person name="Houmard J."/>
            <person name="De Marsac N.T."/>
        </authorList>
    </citation>
    <scope>INDUCTION</scope>
    <source>
        <strain>UTEX 481 / PCC 7601 / SAG 1410-2</strain>
    </source>
</reference>
<comment type="function">
    <text>Light-harvesting photosynthetic bile pigment-protein from the phycobiliprotein complex. Allophycocyanin has a maximum absorption at approximately 650 nanometers.</text>
</comment>
<comment type="subunit">
    <text evidence="1">Component of the phycobilisome. Heterodimer of an alpha and a beta chain (By similarity).</text>
</comment>
<comment type="subcellular location">
    <subcellularLocation>
        <location evidence="1">Cellular thylakoid membrane</location>
        <topology evidence="1">Peripheral membrane protein</topology>
        <orientation evidence="1">Cytoplasmic side</orientation>
    </subcellularLocation>
    <text evidence="1">Forms the core of the phycobilisome.</text>
</comment>
<comment type="induction">
    <text evidence="2 3">Constitutively transcribed in vegetative cells, not expressed during hormogonia differentiation in red light.</text>
</comment>
<comment type="PTM">
    <text evidence="1">Contains one covalently linked bilin chromophore.</text>
</comment>
<comment type="similarity">
    <text evidence="5">Belongs to the phycobiliprotein family.</text>
</comment>
<keyword id="KW-0042">Antenna complex</keyword>
<keyword id="KW-0089">Bile pigment</keyword>
<keyword id="KW-0157">Chromophore</keyword>
<keyword id="KW-0249">Electron transport</keyword>
<keyword id="KW-0472">Membrane</keyword>
<keyword id="KW-0488">Methylation</keyword>
<keyword id="KW-0602">Photosynthesis</keyword>
<keyword id="KW-0605">Phycobilisome</keyword>
<keyword id="KW-0793">Thylakoid</keyword>
<keyword id="KW-0813">Transport</keyword>
<feature type="initiator methionine" description="Removed" evidence="1">
    <location>
        <position position="1"/>
    </location>
</feature>
<feature type="chain" id="PRO_0000199071" description="Allophycocyanin alpha chain 1">
    <location>
        <begin position="2"/>
        <end position="161"/>
    </location>
</feature>
<feature type="binding site" description="covalent" evidence="1">
    <location>
        <position position="81"/>
    </location>
    <ligand>
        <name>(2R,3E)-phycocyanobilin</name>
        <dbReference type="ChEBI" id="CHEBI:85275"/>
    </ligand>
</feature>
<feature type="modified residue" description="N4-methylasparagine" evidence="1">
    <location>
        <position position="71"/>
    </location>
</feature>
<name>PHAA1_MICDP</name>
<accession>P16570</accession>
<protein>
    <recommendedName>
        <fullName>Allophycocyanin alpha chain 1</fullName>
    </recommendedName>
</protein>
<proteinExistence type="evidence at transcript level"/>
<sequence length="161" mass="17365">MSIVTKSIVNADAEARYLSPGELDRIKSFVSGGERRLRIAQILTENRERLVKQAGEQVFQKRPDVVSPGGNAYGQELTATCLRDLDYYLRLVTYGIVSGDVTPIEEIGVIGAREMYKSLGTPIEGITEGIRALKSGASSLLSGEDAAEAGSYFDYVVGALS</sequence>
<evidence type="ECO:0000250" key="1"/>
<evidence type="ECO:0000269" key="2">
    <source>
    </source>
</evidence>
<evidence type="ECO:0000269" key="3">
    <source>
    </source>
</evidence>
<evidence type="ECO:0000303" key="4">
    <source>
    </source>
</evidence>
<evidence type="ECO:0000305" key="5"/>
<organism>
    <name type="scientific">Microchaete diplosiphon</name>
    <name type="common">Fremyella diplosiphon</name>
    <dbReference type="NCBI Taxonomy" id="1197"/>
    <lineage>
        <taxon>Bacteria</taxon>
        <taxon>Bacillati</taxon>
        <taxon>Cyanobacteriota</taxon>
        <taxon>Cyanophyceae</taxon>
        <taxon>Nostocales</taxon>
        <taxon>Rivulariaceae</taxon>
        <taxon>Microchaete</taxon>
    </lineage>
</organism>
<gene>
    <name evidence="4" type="primary">apcA1</name>
</gene>
<dbReference type="EMBL" id="M20806">
    <property type="protein sequence ID" value="AAA24874.1"/>
    <property type="molecule type" value="Genomic_DNA"/>
</dbReference>
<dbReference type="SMR" id="P16570"/>
<dbReference type="GO" id="GO:0030089">
    <property type="term" value="C:phycobilisome"/>
    <property type="evidence" value="ECO:0007669"/>
    <property type="project" value="UniProtKB-KW"/>
</dbReference>
<dbReference type="GO" id="GO:0031676">
    <property type="term" value="C:plasma membrane-derived thylakoid membrane"/>
    <property type="evidence" value="ECO:0007669"/>
    <property type="project" value="UniProtKB-SubCell"/>
</dbReference>
<dbReference type="GO" id="GO:0015979">
    <property type="term" value="P:photosynthesis"/>
    <property type="evidence" value="ECO:0007669"/>
    <property type="project" value="UniProtKB-KW"/>
</dbReference>
<dbReference type="CDD" id="cd12125">
    <property type="entry name" value="APC_alpha"/>
    <property type="match status" value="1"/>
</dbReference>
<dbReference type="Gene3D" id="1.10.490.20">
    <property type="entry name" value="Phycocyanins"/>
    <property type="match status" value="1"/>
</dbReference>
<dbReference type="InterPro" id="IPR009050">
    <property type="entry name" value="Globin-like_sf"/>
</dbReference>
<dbReference type="InterPro" id="IPR012128">
    <property type="entry name" value="Phycobilisome_asu/bsu"/>
</dbReference>
<dbReference type="InterPro" id="IPR038719">
    <property type="entry name" value="Phycobilisome_asu/bsu_sf"/>
</dbReference>
<dbReference type="PANTHER" id="PTHR34011:SF2">
    <property type="entry name" value="ALLOPHYCOCYANIN ALPHA CHAIN"/>
    <property type="match status" value="1"/>
</dbReference>
<dbReference type="PANTHER" id="PTHR34011">
    <property type="entry name" value="PHYCOBILISOME 32.1 KDA LINKER POLYPEPTIDE, PHYCOCYANIN-ASSOCIATED, ROD 2-RELATED"/>
    <property type="match status" value="1"/>
</dbReference>
<dbReference type="Pfam" id="PF00502">
    <property type="entry name" value="Phycobilisome"/>
    <property type="match status" value="1"/>
</dbReference>
<dbReference type="PIRSF" id="PIRSF000081">
    <property type="entry name" value="Phycocyanin"/>
    <property type="match status" value="1"/>
</dbReference>
<dbReference type="SUPFAM" id="SSF46458">
    <property type="entry name" value="Globin-like"/>
    <property type="match status" value="1"/>
</dbReference>